<organism>
    <name type="scientific">Citrobacter koseri (strain ATCC BAA-895 / CDC 4225-83 / SGSC4696)</name>
    <dbReference type="NCBI Taxonomy" id="290338"/>
    <lineage>
        <taxon>Bacteria</taxon>
        <taxon>Pseudomonadati</taxon>
        <taxon>Pseudomonadota</taxon>
        <taxon>Gammaproteobacteria</taxon>
        <taxon>Enterobacterales</taxon>
        <taxon>Enterobacteriaceae</taxon>
        <taxon>Citrobacter</taxon>
    </lineage>
</organism>
<feature type="chain" id="PRO_1000004878" description="Peptide chain release factor 1">
    <location>
        <begin position="1"/>
        <end position="360"/>
    </location>
</feature>
<feature type="region of interest" description="Disordered" evidence="2">
    <location>
        <begin position="284"/>
        <end position="313"/>
    </location>
</feature>
<feature type="modified residue" description="N5-methylglutamine" evidence="1">
    <location>
        <position position="235"/>
    </location>
</feature>
<gene>
    <name evidence="1" type="primary">prfA</name>
    <name type="ordered locus">CKO_01275</name>
</gene>
<protein>
    <recommendedName>
        <fullName evidence="1">Peptide chain release factor 1</fullName>
        <shortName evidence="1">RF-1</shortName>
    </recommendedName>
</protein>
<proteinExistence type="inferred from homology"/>
<accession>A8AG02</accession>
<sequence length="360" mass="40344">MKPSIVAKLEALHERHEEVQALLGDAGTIADQERFRALSREYAQLSDVSRCFTDWQQVQDDIETAQMMLDDPEMREMAQDELREAKEKGEQLEQQLQVLLLPKDPDDERNAFLEVRAGTGGDEAALFAGDLFRMYSRYAEARRWRVEIMSASEGEHGGYKEIIAKISGDGVYGRLKFESGGHRVQRVPATESQGRIHTSACTVAVMPELPEAELPDINPADLRIDTFRSSGAGGQHVNTTDSAIRITHLPTGIVVECQDERSQHKNKAKALSVLGARIHAAETAKRQQAEASTRRNLLGSGDRSDRNRTYNFPQGRVTDHRINLTLYRLDEAMEGKLDMLIEPIVQEHQADQLAALSEQE</sequence>
<name>RF1_CITK8</name>
<evidence type="ECO:0000255" key="1">
    <source>
        <dbReference type="HAMAP-Rule" id="MF_00093"/>
    </source>
</evidence>
<evidence type="ECO:0000256" key="2">
    <source>
        <dbReference type="SAM" id="MobiDB-lite"/>
    </source>
</evidence>
<keyword id="KW-0963">Cytoplasm</keyword>
<keyword id="KW-0488">Methylation</keyword>
<keyword id="KW-0648">Protein biosynthesis</keyword>
<keyword id="KW-1185">Reference proteome</keyword>
<comment type="function">
    <text evidence="1">Peptide chain release factor 1 directs the termination of translation in response to the peptide chain termination codons UAG and UAA.</text>
</comment>
<comment type="subcellular location">
    <subcellularLocation>
        <location evidence="1">Cytoplasm</location>
    </subcellularLocation>
</comment>
<comment type="PTM">
    <text evidence="1">Methylated by PrmC. Methylation increases the termination efficiency of RF1.</text>
</comment>
<comment type="similarity">
    <text evidence="1">Belongs to the prokaryotic/mitochondrial release factor family.</text>
</comment>
<dbReference type="EMBL" id="CP000822">
    <property type="protein sequence ID" value="ABV12415.1"/>
    <property type="molecule type" value="Genomic_DNA"/>
</dbReference>
<dbReference type="RefSeq" id="WP_012132158.1">
    <property type="nucleotide sequence ID" value="NC_009792.1"/>
</dbReference>
<dbReference type="SMR" id="A8AG02"/>
<dbReference type="STRING" id="290338.CKO_01275"/>
<dbReference type="GeneID" id="45135391"/>
<dbReference type="KEGG" id="cko:CKO_01275"/>
<dbReference type="HOGENOM" id="CLU_036856_0_1_6"/>
<dbReference type="OrthoDB" id="9806673at2"/>
<dbReference type="Proteomes" id="UP000008148">
    <property type="component" value="Chromosome"/>
</dbReference>
<dbReference type="GO" id="GO:0005737">
    <property type="term" value="C:cytoplasm"/>
    <property type="evidence" value="ECO:0007669"/>
    <property type="project" value="UniProtKB-SubCell"/>
</dbReference>
<dbReference type="GO" id="GO:0016149">
    <property type="term" value="F:translation release factor activity, codon specific"/>
    <property type="evidence" value="ECO:0007669"/>
    <property type="project" value="UniProtKB-UniRule"/>
</dbReference>
<dbReference type="FunFam" id="3.30.160.20:FF:000004">
    <property type="entry name" value="Peptide chain release factor 1"/>
    <property type="match status" value="1"/>
</dbReference>
<dbReference type="FunFam" id="3.30.70.1660:FF:000002">
    <property type="entry name" value="Peptide chain release factor 1"/>
    <property type="match status" value="1"/>
</dbReference>
<dbReference type="FunFam" id="3.30.70.1660:FF:000004">
    <property type="entry name" value="Peptide chain release factor 1"/>
    <property type="match status" value="1"/>
</dbReference>
<dbReference type="Gene3D" id="3.30.160.20">
    <property type="match status" value="1"/>
</dbReference>
<dbReference type="Gene3D" id="3.30.70.1660">
    <property type="match status" value="1"/>
</dbReference>
<dbReference type="Gene3D" id="6.10.140.1950">
    <property type="match status" value="1"/>
</dbReference>
<dbReference type="HAMAP" id="MF_00093">
    <property type="entry name" value="Rel_fac_1"/>
    <property type="match status" value="1"/>
</dbReference>
<dbReference type="InterPro" id="IPR005139">
    <property type="entry name" value="PCRF"/>
</dbReference>
<dbReference type="InterPro" id="IPR000352">
    <property type="entry name" value="Pep_chain_release_fac_I"/>
</dbReference>
<dbReference type="InterPro" id="IPR045853">
    <property type="entry name" value="Pep_chain_release_fac_I_sf"/>
</dbReference>
<dbReference type="InterPro" id="IPR050057">
    <property type="entry name" value="Prokaryotic/Mito_RF"/>
</dbReference>
<dbReference type="InterPro" id="IPR004373">
    <property type="entry name" value="RF-1"/>
</dbReference>
<dbReference type="NCBIfam" id="TIGR00019">
    <property type="entry name" value="prfA"/>
    <property type="match status" value="1"/>
</dbReference>
<dbReference type="NCBIfam" id="NF001859">
    <property type="entry name" value="PRK00591.1"/>
    <property type="match status" value="1"/>
</dbReference>
<dbReference type="PANTHER" id="PTHR43804">
    <property type="entry name" value="LD18447P"/>
    <property type="match status" value="1"/>
</dbReference>
<dbReference type="PANTHER" id="PTHR43804:SF7">
    <property type="entry name" value="LD18447P"/>
    <property type="match status" value="1"/>
</dbReference>
<dbReference type="Pfam" id="PF03462">
    <property type="entry name" value="PCRF"/>
    <property type="match status" value="1"/>
</dbReference>
<dbReference type="Pfam" id="PF00472">
    <property type="entry name" value="RF-1"/>
    <property type="match status" value="1"/>
</dbReference>
<dbReference type="SMART" id="SM00937">
    <property type="entry name" value="PCRF"/>
    <property type="match status" value="1"/>
</dbReference>
<dbReference type="SUPFAM" id="SSF75620">
    <property type="entry name" value="Release factor"/>
    <property type="match status" value="1"/>
</dbReference>
<dbReference type="PROSITE" id="PS00745">
    <property type="entry name" value="RF_PROK_I"/>
    <property type="match status" value="1"/>
</dbReference>
<reference key="1">
    <citation type="submission" date="2007-08" db="EMBL/GenBank/DDBJ databases">
        <authorList>
            <consortium name="The Citrobacter koseri Genome Sequencing Project"/>
            <person name="McClelland M."/>
            <person name="Sanderson E.K."/>
            <person name="Porwollik S."/>
            <person name="Spieth J."/>
            <person name="Clifton W.S."/>
            <person name="Latreille P."/>
            <person name="Courtney L."/>
            <person name="Wang C."/>
            <person name="Pepin K."/>
            <person name="Bhonagiri V."/>
            <person name="Nash W."/>
            <person name="Johnson M."/>
            <person name="Thiruvilangam P."/>
            <person name="Wilson R."/>
        </authorList>
    </citation>
    <scope>NUCLEOTIDE SEQUENCE [LARGE SCALE GENOMIC DNA]</scope>
    <source>
        <strain>ATCC BAA-895 / CDC 4225-83 / SGSC4696</strain>
    </source>
</reference>